<keyword id="KW-0326">Glycosidase</keyword>
<keyword id="KW-0378">Hydrolase</keyword>
<keyword id="KW-0479">Metal-binding</keyword>
<keyword id="KW-1185">Reference proteome</keyword>
<gene>
    <name type="primary">mngB</name>
    <name type="ordered locus">BH0788/BH0789</name>
</gene>
<reference key="1">
    <citation type="journal article" date="2000" name="Nucleic Acids Res.">
        <title>Complete genome sequence of the alkaliphilic bacterium Bacillus halodurans and genomic sequence comparison with Bacillus subtilis.</title>
        <authorList>
            <person name="Takami H."/>
            <person name="Nakasone K."/>
            <person name="Takaki Y."/>
            <person name="Maeno G."/>
            <person name="Sasaki R."/>
            <person name="Masui N."/>
            <person name="Fuji F."/>
            <person name="Hirama C."/>
            <person name="Nakamura Y."/>
            <person name="Ogasawara N."/>
            <person name="Kuhara S."/>
            <person name="Horikoshi K."/>
        </authorList>
    </citation>
    <scope>NUCLEOTIDE SEQUENCE [LARGE SCALE GENOMIC DNA]</scope>
    <source>
        <strain>ATCC BAA-125 / DSM 18197 / FERM 7344 / JCM 9153 / C-125</strain>
    </source>
</reference>
<dbReference type="EC" id="3.2.1.-" evidence="2"/>
<dbReference type="EMBL" id="BA000004">
    <property type="protein sequence ID" value="BAB04507.1"/>
    <property type="status" value="ALT_FRAME"/>
    <property type="molecule type" value="Genomic_DNA"/>
</dbReference>
<dbReference type="EMBL" id="BA000004">
    <property type="protein sequence ID" value="BAB04508.1"/>
    <property type="status" value="ALT_FRAME"/>
    <property type="molecule type" value="Genomic_DNA"/>
</dbReference>
<dbReference type="PIR" id="D83748">
    <property type="entry name" value="D83748"/>
</dbReference>
<dbReference type="PIR" id="E83748">
    <property type="entry name" value="E83748"/>
</dbReference>
<dbReference type="SMR" id="Q9KER1"/>
<dbReference type="STRING" id="272558.gene:10726663"/>
<dbReference type="CAZy" id="GH38">
    <property type="family name" value="Glycoside Hydrolase Family 38"/>
</dbReference>
<dbReference type="KEGG" id="bha:BH0788"/>
<dbReference type="KEGG" id="bha:BH0789"/>
<dbReference type="eggNOG" id="COG0383">
    <property type="taxonomic scope" value="Bacteria"/>
</dbReference>
<dbReference type="HOGENOM" id="CLU_1674403_0_0_9"/>
<dbReference type="Proteomes" id="UP000001258">
    <property type="component" value="Chromosome"/>
</dbReference>
<dbReference type="GO" id="GO:0004559">
    <property type="term" value="F:alpha-mannosidase activity"/>
    <property type="evidence" value="ECO:0007669"/>
    <property type="project" value="InterPro"/>
</dbReference>
<dbReference type="GO" id="GO:0030246">
    <property type="term" value="F:carbohydrate binding"/>
    <property type="evidence" value="ECO:0007669"/>
    <property type="project" value="InterPro"/>
</dbReference>
<dbReference type="GO" id="GO:0046872">
    <property type="term" value="F:metal ion binding"/>
    <property type="evidence" value="ECO:0007669"/>
    <property type="project" value="UniProtKB-KW"/>
</dbReference>
<dbReference type="GO" id="GO:0006013">
    <property type="term" value="P:mannose metabolic process"/>
    <property type="evidence" value="ECO:0007669"/>
    <property type="project" value="InterPro"/>
</dbReference>
<dbReference type="GO" id="GO:0009313">
    <property type="term" value="P:oligosaccharide catabolic process"/>
    <property type="evidence" value="ECO:0007669"/>
    <property type="project" value="TreeGrafter"/>
</dbReference>
<dbReference type="CDD" id="cd10814">
    <property type="entry name" value="GH38N_AMII_SpGH38_like"/>
    <property type="match status" value="1"/>
</dbReference>
<dbReference type="Gene3D" id="2.60.40.2210">
    <property type="match status" value="1"/>
</dbReference>
<dbReference type="Gene3D" id="2.60.40.2220">
    <property type="match status" value="1"/>
</dbReference>
<dbReference type="Gene3D" id="3.20.110.10">
    <property type="entry name" value="Glycoside hydrolase 38, N terminal domain"/>
    <property type="match status" value="1"/>
</dbReference>
<dbReference type="Gene3D" id="1.20.1270.50">
    <property type="entry name" value="Glycoside hydrolase family 38, central domain"/>
    <property type="match status" value="1"/>
</dbReference>
<dbReference type="Gene3D" id="2.70.98.30">
    <property type="entry name" value="Golgi alpha-mannosidase II, domain 4"/>
    <property type="match status" value="1"/>
</dbReference>
<dbReference type="InterPro" id="IPR011013">
    <property type="entry name" value="Gal_mutarotase_sf_dom"/>
</dbReference>
<dbReference type="InterPro" id="IPR041509">
    <property type="entry name" value="GH38_beta-1"/>
</dbReference>
<dbReference type="InterPro" id="IPR041147">
    <property type="entry name" value="GH38_C"/>
</dbReference>
<dbReference type="InterPro" id="IPR011330">
    <property type="entry name" value="Glyco_hydro/deAcase_b/a-brl"/>
</dbReference>
<dbReference type="InterPro" id="IPR011682">
    <property type="entry name" value="Glyco_hydro_38_C"/>
</dbReference>
<dbReference type="InterPro" id="IPR015341">
    <property type="entry name" value="Glyco_hydro_38_cen"/>
</dbReference>
<dbReference type="InterPro" id="IPR037094">
    <property type="entry name" value="Glyco_hydro_38_cen_sf"/>
</dbReference>
<dbReference type="InterPro" id="IPR000602">
    <property type="entry name" value="Glyco_hydro_38_N"/>
</dbReference>
<dbReference type="InterPro" id="IPR027291">
    <property type="entry name" value="Glyco_hydro_38_N_sf"/>
</dbReference>
<dbReference type="InterPro" id="IPR028995">
    <property type="entry name" value="Glyco_hydro_57/38_cen_sf"/>
</dbReference>
<dbReference type="PANTHER" id="PTHR46017">
    <property type="entry name" value="ALPHA-MANNOSIDASE 2C1"/>
    <property type="match status" value="1"/>
</dbReference>
<dbReference type="PANTHER" id="PTHR46017:SF2">
    <property type="entry name" value="MANNOSYLGLYCERATE HYDROLASE"/>
    <property type="match status" value="1"/>
</dbReference>
<dbReference type="Pfam" id="PF09261">
    <property type="entry name" value="Alpha-mann_mid"/>
    <property type="match status" value="1"/>
</dbReference>
<dbReference type="Pfam" id="PF17677">
    <property type="entry name" value="Glyco_hydro38C2"/>
    <property type="match status" value="1"/>
</dbReference>
<dbReference type="Pfam" id="PF18438">
    <property type="entry name" value="Glyco_hydro_38"/>
    <property type="match status" value="1"/>
</dbReference>
<dbReference type="Pfam" id="PF07748">
    <property type="entry name" value="Glyco_hydro_38C"/>
    <property type="match status" value="1"/>
</dbReference>
<dbReference type="Pfam" id="PF01074">
    <property type="entry name" value="Glyco_hydro_38N"/>
    <property type="match status" value="1"/>
</dbReference>
<dbReference type="SMART" id="SM00872">
    <property type="entry name" value="Alpha-mann_mid"/>
    <property type="match status" value="1"/>
</dbReference>
<dbReference type="SUPFAM" id="SSF88688">
    <property type="entry name" value="Families 57/38 glycoside transferase middle domain"/>
    <property type="match status" value="1"/>
</dbReference>
<dbReference type="SUPFAM" id="SSF74650">
    <property type="entry name" value="Galactose mutarotase-like"/>
    <property type="match status" value="1"/>
</dbReference>
<dbReference type="SUPFAM" id="SSF88713">
    <property type="entry name" value="Glycoside hydrolase/deacetylase"/>
    <property type="match status" value="1"/>
</dbReference>
<name>MNGB_HALH5</name>
<proteinExistence type="inferred from homology"/>
<feature type="chain" id="PRO_0000343407" description="Putative mannosylglycerate hydrolase">
    <location>
        <begin position="1"/>
        <end position="896"/>
    </location>
</feature>
<feature type="active site" description="Nucleophile" evidence="1">
    <location>
        <position position="125"/>
    </location>
</feature>
<feature type="binding site" evidence="1">
    <location>
        <position position="12"/>
    </location>
    <ligand>
        <name>a divalent metal cation</name>
        <dbReference type="ChEBI" id="CHEBI:60240"/>
    </ligand>
</feature>
<feature type="binding site" evidence="1">
    <location>
        <position position="14"/>
    </location>
    <ligand>
        <name>a divalent metal cation</name>
        <dbReference type="ChEBI" id="CHEBI:60240"/>
    </ligand>
</feature>
<feature type="binding site" evidence="1">
    <location>
        <position position="125"/>
    </location>
    <ligand>
        <name>a divalent metal cation</name>
        <dbReference type="ChEBI" id="CHEBI:60240"/>
    </ligand>
</feature>
<feature type="binding site" evidence="1">
    <location>
        <position position="348"/>
    </location>
    <ligand>
        <name>a divalent metal cation</name>
        <dbReference type="ChEBI" id="CHEBI:60240"/>
    </ligand>
</feature>
<sequence length="896" mass="102540">MKKTAHIISHSHWDREWYMPFEGHRYYLIQLMDDLLELFATDPNFRSFHMDGQTIMLEDYLNIRPEKEAEVRKYIQDGRLVIGPWYILQDAFLTSAEANVRNLLYGIKDTETFGQKREQIGYFPDTFGIYGQAPQLLAQAGIRAAVFGRGVTPTGFNNQVQHDDYSSPFSELIWEAPDGSQVIGILLANWYSNGNEIPTDEDEAQTFWVKKLRDAERFASTSQLLFMNGCDHQPVQKDVTQAIKVAETLFPDVAFKHSNFHDYLTQIKEELPKELQKITGELRNQKTDGWSTLVNTASARIYLKQANDRCQTLLTNVLEPMCLLVENKSLHRDFSEYYWKLLMENHPHDSICGCSIDAVHREMKTRFEKVEAGATTFIAEQGKEIAAQINTLHDSEEAIPLVVLKTNGTSGKRVVRHKVAMKKIYFDEMDFRHIPDRLKEIVMPTYRLEFPNKGSVPIEVQDAGVRFGYDLPRDGFRRPYYARELEVTFSYDSDLYLGYECGFLVPVEEKQTEARKELIGDPSMNTLENEAMKVMIHRNGSYSILDKTTGFEYRHLGIYEDVGDIGNEYMFKASSDGVRYTTEACEASIRIIENNSLCATVEICQTLSVPAAADERLKEEQERLVWHPDRKAGRSKERTDITLRTELTLEQGAKGLKVNVNIDNTAKDHRMRALFPVERARGNHYADSIYEIVERPNTPDPKWQNPAFDHHMQRLVSLDNGEYGLTIATKGLHEYEIVSDSIAVTLLRSVGELGDWGLFETPEAQCFGQNEAQFVLLPHKGDVLSANVYVAAYDDPVEPTVIQTEQSMGPLPHATNLFQWSGEGLVLTACKPTMDGRGMILRWFNPKREGEALIVQSTHFLQIYRSTILEEQIEKLGTENVQIEVRPQEIVTLRFE</sequence>
<comment type="function">
    <text evidence="2">May hydrolyze 6-phospho-mannosyl-D-glycerate to mannose-6-phosphate and glycerate.</text>
</comment>
<comment type="catalytic activity">
    <reaction evidence="2">
        <text>(2R)-2-O-(6-phospho-alpha-D-mannosyl)-glycerate + H2O = alpha-D-mannose 6-phosphate + (R)-glycerate</text>
        <dbReference type="Rhea" id="RHEA:27866"/>
        <dbReference type="ChEBI" id="CHEBI:15377"/>
        <dbReference type="ChEBI" id="CHEBI:16659"/>
        <dbReference type="ChEBI" id="CHEBI:60331"/>
        <dbReference type="ChEBI" id="CHEBI:60332"/>
    </reaction>
</comment>
<comment type="cofactor">
    <cofactor evidence="1">
        <name>a divalent metal cation</name>
        <dbReference type="ChEBI" id="CHEBI:60240"/>
    </cofactor>
    <text evidence="1">Binds 1 divalent metal cation per subunit.</text>
</comment>
<comment type="similarity">
    <text evidence="3">Belongs to the glycosyl hydrolase 38 family.</text>
</comment>
<comment type="sequence caution" evidence="3">
    <conflict type="frameshift">
        <sequence resource="EMBL-CDS" id="BAB04507"/>
    </conflict>
    <text>Produces two separate ORFs.</text>
</comment>
<comment type="sequence caution" evidence="3">
    <conflict type="frameshift">
        <sequence resource="EMBL-CDS" id="BAB04508"/>
    </conflict>
    <text>Produces two separate ORFs.</text>
</comment>
<organism>
    <name type="scientific">Halalkalibacterium halodurans (strain ATCC BAA-125 / DSM 18197 / FERM 7344 / JCM 9153 / C-125)</name>
    <name type="common">Bacillus halodurans</name>
    <dbReference type="NCBI Taxonomy" id="272558"/>
    <lineage>
        <taxon>Bacteria</taxon>
        <taxon>Bacillati</taxon>
        <taxon>Bacillota</taxon>
        <taxon>Bacilli</taxon>
        <taxon>Bacillales</taxon>
        <taxon>Bacillaceae</taxon>
        <taxon>Halalkalibacterium (ex Joshi et al. 2022)</taxon>
    </lineage>
</organism>
<accession>Q9KER1</accession>
<accession>Q9KER0</accession>
<evidence type="ECO:0000250" key="1"/>
<evidence type="ECO:0000250" key="2">
    <source>
        <dbReference type="UniProtKB" id="P54746"/>
    </source>
</evidence>
<evidence type="ECO:0000305" key="3"/>
<protein>
    <recommendedName>
        <fullName>Putative mannosylglycerate hydrolase</fullName>
        <ecNumber evidence="2">3.2.1.-</ecNumber>
    </recommendedName>
    <alternativeName>
        <fullName>2-O-(6-phospho-mannosyl)-D-glycerate hydrolase</fullName>
    </alternativeName>
    <alternativeName>
        <fullName>Alpha-mannosidase mngB</fullName>
    </alternativeName>
</protein>